<dbReference type="EMBL" id="AE016795">
    <property type="protein sequence ID" value="AAO10528.1"/>
    <property type="molecule type" value="Genomic_DNA"/>
</dbReference>
<dbReference type="RefSeq" id="WP_011080022.1">
    <property type="nucleotide sequence ID" value="NC_004459.3"/>
</dbReference>
<dbReference type="SMR" id="Q8DAQ0"/>
<dbReference type="KEGG" id="vvu:VV1_2143"/>
<dbReference type="HOGENOM" id="CLU_049853_0_0_6"/>
<dbReference type="Proteomes" id="UP000002275">
    <property type="component" value="Chromosome 1"/>
</dbReference>
<dbReference type="GO" id="GO:0005737">
    <property type="term" value="C:cytoplasm"/>
    <property type="evidence" value="ECO:0007669"/>
    <property type="project" value="UniProtKB-UniRule"/>
</dbReference>
<dbReference type="GO" id="GO:0009295">
    <property type="term" value="C:nucleoid"/>
    <property type="evidence" value="ECO:0007669"/>
    <property type="project" value="UniProtKB-SubCell"/>
</dbReference>
<dbReference type="GO" id="GO:0005509">
    <property type="term" value="F:calcium ion binding"/>
    <property type="evidence" value="ECO:0007669"/>
    <property type="project" value="UniProtKB-UniRule"/>
</dbReference>
<dbReference type="GO" id="GO:0051301">
    <property type="term" value="P:cell division"/>
    <property type="evidence" value="ECO:0007669"/>
    <property type="project" value="UniProtKB-KW"/>
</dbReference>
<dbReference type="GO" id="GO:0030261">
    <property type="term" value="P:chromosome condensation"/>
    <property type="evidence" value="ECO:0007669"/>
    <property type="project" value="UniProtKB-KW"/>
</dbReference>
<dbReference type="GO" id="GO:0007059">
    <property type="term" value="P:chromosome segregation"/>
    <property type="evidence" value="ECO:0007669"/>
    <property type="project" value="UniProtKB-UniRule"/>
</dbReference>
<dbReference type="GO" id="GO:0006260">
    <property type="term" value="P:DNA replication"/>
    <property type="evidence" value="ECO:0007669"/>
    <property type="project" value="UniProtKB-UniRule"/>
</dbReference>
<dbReference type="CDD" id="cd16337">
    <property type="entry name" value="MukF_C"/>
    <property type="match status" value="1"/>
</dbReference>
<dbReference type="CDD" id="cd16335">
    <property type="entry name" value="MukF_N"/>
    <property type="match status" value="1"/>
</dbReference>
<dbReference type="Gene3D" id="1.20.58.590">
    <property type="entry name" value="Chromosome partition protein MukF, middle domain"/>
    <property type="match status" value="1"/>
</dbReference>
<dbReference type="Gene3D" id="1.10.225.40">
    <property type="entry name" value="MukF, C-terminal domain"/>
    <property type="match status" value="1"/>
</dbReference>
<dbReference type="Gene3D" id="1.10.10.10">
    <property type="entry name" value="Winged helix-like DNA-binding domain superfamily/Winged helix DNA-binding domain"/>
    <property type="match status" value="1"/>
</dbReference>
<dbReference type="HAMAP" id="MF_01803">
    <property type="entry name" value="MukF"/>
    <property type="match status" value="1"/>
</dbReference>
<dbReference type="InterPro" id="IPR005582">
    <property type="entry name" value="Chromosome_partition_MukF"/>
</dbReference>
<dbReference type="InterPro" id="IPR033441">
    <property type="entry name" value="MukF_C"/>
</dbReference>
<dbReference type="InterPro" id="IPR038198">
    <property type="entry name" value="MukF_C_sf"/>
</dbReference>
<dbReference type="InterPro" id="IPR033440">
    <property type="entry name" value="MukF_M"/>
</dbReference>
<dbReference type="InterPro" id="IPR036141">
    <property type="entry name" value="MukF_M_sp"/>
</dbReference>
<dbReference type="InterPro" id="IPR033439">
    <property type="entry name" value="MukF_WHTH"/>
</dbReference>
<dbReference type="InterPro" id="IPR036388">
    <property type="entry name" value="WH-like_DNA-bd_sf"/>
</dbReference>
<dbReference type="InterPro" id="IPR036390">
    <property type="entry name" value="WH_DNA-bd_sf"/>
</dbReference>
<dbReference type="NCBIfam" id="NF003615">
    <property type="entry name" value="PRK05260.1"/>
    <property type="match status" value="1"/>
</dbReference>
<dbReference type="Pfam" id="PF03882">
    <property type="entry name" value="KicB"/>
    <property type="match status" value="1"/>
</dbReference>
<dbReference type="Pfam" id="PF17193">
    <property type="entry name" value="MukF_C"/>
    <property type="match status" value="1"/>
</dbReference>
<dbReference type="Pfam" id="PF17192">
    <property type="entry name" value="MukF_M"/>
    <property type="match status" value="1"/>
</dbReference>
<dbReference type="PIRSF" id="PIRSF018282">
    <property type="entry name" value="MukF"/>
    <property type="match status" value="1"/>
</dbReference>
<dbReference type="SUPFAM" id="SSF140570">
    <property type="entry name" value="MukF C-terminal domain-like"/>
    <property type="match status" value="1"/>
</dbReference>
<dbReference type="SUPFAM" id="SSF46785">
    <property type="entry name" value="Winged helix' DNA-binding domain"/>
    <property type="match status" value="1"/>
</dbReference>
<keyword id="KW-0106">Calcium</keyword>
<keyword id="KW-0131">Cell cycle</keyword>
<keyword id="KW-0132">Cell division</keyword>
<keyword id="KW-0159">Chromosome partition</keyword>
<keyword id="KW-0963">Cytoplasm</keyword>
<keyword id="KW-0226">DNA condensation</keyword>
<organism>
    <name type="scientific">Vibrio vulnificus (strain CMCP6)</name>
    <dbReference type="NCBI Taxonomy" id="216895"/>
    <lineage>
        <taxon>Bacteria</taxon>
        <taxon>Pseudomonadati</taxon>
        <taxon>Pseudomonadota</taxon>
        <taxon>Gammaproteobacteria</taxon>
        <taxon>Vibrionales</taxon>
        <taxon>Vibrionaceae</taxon>
        <taxon>Vibrio</taxon>
    </lineage>
</organism>
<gene>
    <name evidence="1" type="primary">mukF</name>
    <name type="ordered locus">VV1_2143</name>
</gene>
<sequence>MSETTLNAAEQPIDELVSWVKQHDFSLNLTTERLAFLIAIAVLSNERFDEELGEGELHDAFTIVTRLFEETGEASAFRANNAINELVKQRLISRFTSEMTEGASIYRLSPLAIGITDYYVRHREFSKLRLSIQLSMVAGEMAKAIEAAKQGGTAGHWKKNVYAVLKYSVGEIFDQIDLNQRVMDEQQQSVKQQIADLLNKDWREAINNCESLLSETSNTLKELQDTLQAAGDELQTQILDIQELVYGDEELEFIEETLFGLQMKLDRITSWGQQAIDLWIGYDRHVHKFIRTAIDMDKNRIFSTRLRQSVKDYFDMPWYLTYADAERLSDLRDEALVLRDDEVTGQVPLEVEYEEFQQVNDELAERIGEMLRLHKDNGKPIDLGIVLKDYLAQHPSTHHFDLARIVIDQAVRMGYSESDYQAIQPDWQAINDYGAKVQANVIDRY</sequence>
<protein>
    <recommendedName>
        <fullName evidence="1">Chromosome partition protein MukF</fullName>
    </recommendedName>
</protein>
<name>MUKF_VIBVU</name>
<feature type="chain" id="PRO_0000211614" description="Chromosome partition protein MukF">
    <location>
        <begin position="1"/>
        <end position="445"/>
    </location>
</feature>
<feature type="region of interest" description="Leucine-zipper">
    <location>
        <begin position="213"/>
        <end position="241"/>
    </location>
</feature>
<reference key="1">
    <citation type="submission" date="2002-12" db="EMBL/GenBank/DDBJ databases">
        <title>Complete genome sequence of Vibrio vulnificus CMCP6.</title>
        <authorList>
            <person name="Rhee J.H."/>
            <person name="Kim S.Y."/>
            <person name="Chung S.S."/>
            <person name="Kim J.J."/>
            <person name="Moon Y.H."/>
            <person name="Jeong H."/>
            <person name="Choy H.E."/>
        </authorList>
    </citation>
    <scope>NUCLEOTIDE SEQUENCE [LARGE SCALE GENOMIC DNA]</scope>
    <source>
        <strain>CMCP6</strain>
    </source>
</reference>
<comment type="function">
    <text evidence="1">Involved in chromosome condensation, segregation and cell cycle progression. May participate in facilitating chromosome segregation by condensation DNA from both sides of a centrally located replisome during cell division. Not required for mini-F plasmid partitioning. Probably acts via its interaction with MukB and MukE. Overexpression results in anucleate cells. It has a calcium binding activity.</text>
</comment>
<comment type="subunit">
    <text evidence="1">Interacts, and probably forms a ternary complex, with MukE and MukB via its C-terminal region. The complex formation is stimulated by calcium or magnesium. It is required for an interaction between MukE and MukB.</text>
</comment>
<comment type="subcellular location">
    <subcellularLocation>
        <location evidence="1">Cytoplasm</location>
        <location evidence="1">Nucleoid</location>
    </subcellularLocation>
    <text evidence="1">Restricted to the nucleoid region.</text>
</comment>
<comment type="similarity">
    <text evidence="1">Belongs to the MukF family.</text>
</comment>
<proteinExistence type="inferred from homology"/>
<accession>Q8DAQ0</accession>
<evidence type="ECO:0000255" key="1">
    <source>
        <dbReference type="HAMAP-Rule" id="MF_01803"/>
    </source>
</evidence>